<reference key="1">
    <citation type="submission" date="2005-07" db="EMBL/GenBank/DDBJ databases">
        <title>Complete sequence of Synechococcus sp. CC9605.</title>
        <authorList>
            <consortium name="US DOE Joint Genome Institute"/>
            <person name="Copeland A."/>
            <person name="Lucas S."/>
            <person name="Lapidus A."/>
            <person name="Barry K."/>
            <person name="Detter J.C."/>
            <person name="Glavina T."/>
            <person name="Hammon N."/>
            <person name="Israni S."/>
            <person name="Pitluck S."/>
            <person name="Schmutz J."/>
            <person name="Martinez M."/>
            <person name="Larimer F."/>
            <person name="Land M."/>
            <person name="Kyrpides N."/>
            <person name="Ivanova N."/>
            <person name="Richardson P."/>
        </authorList>
    </citation>
    <scope>NUCLEOTIDE SEQUENCE [LARGE SCALE GENOMIC DNA]</scope>
    <source>
        <strain>CC9605</strain>
    </source>
</reference>
<accession>Q3ALB5</accession>
<comment type="function">
    <text evidence="2">Cell wall formation.</text>
</comment>
<comment type="catalytic activity">
    <reaction evidence="2">
        <text>2 D-alanine + ATP = D-alanyl-D-alanine + ADP + phosphate + H(+)</text>
        <dbReference type="Rhea" id="RHEA:11224"/>
        <dbReference type="ChEBI" id="CHEBI:15378"/>
        <dbReference type="ChEBI" id="CHEBI:30616"/>
        <dbReference type="ChEBI" id="CHEBI:43474"/>
        <dbReference type="ChEBI" id="CHEBI:57416"/>
        <dbReference type="ChEBI" id="CHEBI:57822"/>
        <dbReference type="ChEBI" id="CHEBI:456216"/>
        <dbReference type="EC" id="6.3.2.4"/>
    </reaction>
</comment>
<comment type="cofactor">
    <cofactor evidence="1">
        <name>Mg(2+)</name>
        <dbReference type="ChEBI" id="CHEBI:18420"/>
    </cofactor>
    <cofactor evidence="1">
        <name>Mn(2+)</name>
        <dbReference type="ChEBI" id="CHEBI:29035"/>
    </cofactor>
    <text evidence="1">Binds 2 magnesium or manganese ions per subunit.</text>
</comment>
<comment type="pathway">
    <text evidence="2">Cell wall biogenesis; peptidoglycan biosynthesis.</text>
</comment>
<comment type="subcellular location">
    <subcellularLocation>
        <location evidence="2">Cytoplasm</location>
    </subcellularLocation>
</comment>
<comment type="similarity">
    <text evidence="2">Belongs to the D-alanine--D-alanine ligase family.</text>
</comment>
<protein>
    <recommendedName>
        <fullName evidence="2">D-alanine--D-alanine ligase</fullName>
        <ecNumber evidence="2">6.3.2.4</ecNumber>
    </recommendedName>
    <alternativeName>
        <fullName evidence="2">D-Ala-D-Ala ligase</fullName>
    </alternativeName>
    <alternativeName>
        <fullName evidence="2">D-alanylalanine synthetase</fullName>
    </alternativeName>
</protein>
<dbReference type="EC" id="6.3.2.4" evidence="2"/>
<dbReference type="EMBL" id="CP000110">
    <property type="protein sequence ID" value="ABB34617.1"/>
    <property type="molecule type" value="Genomic_DNA"/>
</dbReference>
<dbReference type="RefSeq" id="WP_011363842.1">
    <property type="nucleotide sequence ID" value="NC_007516.1"/>
</dbReference>
<dbReference type="SMR" id="Q3ALB5"/>
<dbReference type="STRING" id="110662.Syncc9605_0849"/>
<dbReference type="KEGG" id="syd:Syncc9605_0849"/>
<dbReference type="eggNOG" id="COG1181">
    <property type="taxonomic scope" value="Bacteria"/>
</dbReference>
<dbReference type="HOGENOM" id="CLU_039268_0_0_3"/>
<dbReference type="OrthoDB" id="9813261at2"/>
<dbReference type="UniPathway" id="UPA00219"/>
<dbReference type="GO" id="GO:0005829">
    <property type="term" value="C:cytosol"/>
    <property type="evidence" value="ECO:0007669"/>
    <property type="project" value="TreeGrafter"/>
</dbReference>
<dbReference type="GO" id="GO:0005524">
    <property type="term" value="F:ATP binding"/>
    <property type="evidence" value="ECO:0007669"/>
    <property type="project" value="UniProtKB-KW"/>
</dbReference>
<dbReference type="GO" id="GO:0008716">
    <property type="term" value="F:D-alanine-D-alanine ligase activity"/>
    <property type="evidence" value="ECO:0007669"/>
    <property type="project" value="UniProtKB-UniRule"/>
</dbReference>
<dbReference type="GO" id="GO:0046872">
    <property type="term" value="F:metal ion binding"/>
    <property type="evidence" value="ECO:0007669"/>
    <property type="project" value="UniProtKB-KW"/>
</dbReference>
<dbReference type="GO" id="GO:0071555">
    <property type="term" value="P:cell wall organization"/>
    <property type="evidence" value="ECO:0007669"/>
    <property type="project" value="UniProtKB-KW"/>
</dbReference>
<dbReference type="GO" id="GO:0009252">
    <property type="term" value="P:peptidoglycan biosynthetic process"/>
    <property type="evidence" value="ECO:0007669"/>
    <property type="project" value="UniProtKB-UniRule"/>
</dbReference>
<dbReference type="GO" id="GO:0008360">
    <property type="term" value="P:regulation of cell shape"/>
    <property type="evidence" value="ECO:0007669"/>
    <property type="project" value="UniProtKB-KW"/>
</dbReference>
<dbReference type="FunFam" id="3.30.1490.20:FF:000007">
    <property type="entry name" value="D-alanine--D-alanine ligase"/>
    <property type="match status" value="1"/>
</dbReference>
<dbReference type="FunFam" id="3.30.470.20:FF:000008">
    <property type="entry name" value="D-alanine--D-alanine ligase"/>
    <property type="match status" value="1"/>
</dbReference>
<dbReference type="Gene3D" id="3.40.50.20">
    <property type="match status" value="1"/>
</dbReference>
<dbReference type="Gene3D" id="3.30.1490.20">
    <property type="entry name" value="ATP-grasp fold, A domain"/>
    <property type="match status" value="1"/>
</dbReference>
<dbReference type="Gene3D" id="3.30.470.20">
    <property type="entry name" value="ATP-grasp fold, B domain"/>
    <property type="match status" value="1"/>
</dbReference>
<dbReference type="HAMAP" id="MF_00047">
    <property type="entry name" value="Dala_Dala_lig"/>
    <property type="match status" value="1"/>
</dbReference>
<dbReference type="InterPro" id="IPR011761">
    <property type="entry name" value="ATP-grasp"/>
</dbReference>
<dbReference type="InterPro" id="IPR013815">
    <property type="entry name" value="ATP_grasp_subdomain_1"/>
</dbReference>
<dbReference type="InterPro" id="IPR000291">
    <property type="entry name" value="D-Ala_lig_Van_CS"/>
</dbReference>
<dbReference type="InterPro" id="IPR005905">
    <property type="entry name" value="D_ala_D_ala"/>
</dbReference>
<dbReference type="InterPro" id="IPR011095">
    <property type="entry name" value="Dala_Dala_lig_C"/>
</dbReference>
<dbReference type="InterPro" id="IPR011127">
    <property type="entry name" value="Dala_Dala_lig_N"/>
</dbReference>
<dbReference type="InterPro" id="IPR016185">
    <property type="entry name" value="PreATP-grasp_dom_sf"/>
</dbReference>
<dbReference type="NCBIfam" id="TIGR01205">
    <property type="entry name" value="D_ala_D_alaTIGR"/>
    <property type="match status" value="1"/>
</dbReference>
<dbReference type="NCBIfam" id="NF002528">
    <property type="entry name" value="PRK01966.1-4"/>
    <property type="match status" value="1"/>
</dbReference>
<dbReference type="PANTHER" id="PTHR23132">
    <property type="entry name" value="D-ALANINE--D-ALANINE LIGASE"/>
    <property type="match status" value="1"/>
</dbReference>
<dbReference type="PANTHER" id="PTHR23132:SF25">
    <property type="entry name" value="D-ALANINE--D-ALANINE LIGASE A"/>
    <property type="match status" value="1"/>
</dbReference>
<dbReference type="Pfam" id="PF07478">
    <property type="entry name" value="Dala_Dala_lig_C"/>
    <property type="match status" value="1"/>
</dbReference>
<dbReference type="Pfam" id="PF01820">
    <property type="entry name" value="Dala_Dala_lig_N"/>
    <property type="match status" value="1"/>
</dbReference>
<dbReference type="PIRSF" id="PIRSF039102">
    <property type="entry name" value="Ddl/VanB"/>
    <property type="match status" value="1"/>
</dbReference>
<dbReference type="SUPFAM" id="SSF56059">
    <property type="entry name" value="Glutathione synthetase ATP-binding domain-like"/>
    <property type="match status" value="1"/>
</dbReference>
<dbReference type="SUPFAM" id="SSF52440">
    <property type="entry name" value="PreATP-grasp domain"/>
    <property type="match status" value="1"/>
</dbReference>
<dbReference type="PROSITE" id="PS50975">
    <property type="entry name" value="ATP_GRASP"/>
    <property type="match status" value="1"/>
</dbReference>
<dbReference type="PROSITE" id="PS00843">
    <property type="entry name" value="DALA_DALA_LIGASE_1"/>
    <property type="match status" value="1"/>
</dbReference>
<dbReference type="PROSITE" id="PS00844">
    <property type="entry name" value="DALA_DALA_LIGASE_2"/>
    <property type="match status" value="1"/>
</dbReference>
<evidence type="ECO:0000250" key="1"/>
<evidence type="ECO:0000255" key="2">
    <source>
        <dbReference type="HAMAP-Rule" id="MF_00047"/>
    </source>
</evidence>
<gene>
    <name evidence="2" type="primary">ddl</name>
    <name type="ordered locus">Syncc9605_0849</name>
</gene>
<feature type="chain" id="PRO_1000030515" description="D-alanine--D-alanine ligase">
    <location>
        <begin position="1"/>
        <end position="350"/>
    </location>
</feature>
<feature type="domain" description="ATP-grasp" evidence="2">
    <location>
        <begin position="138"/>
        <end position="346"/>
    </location>
</feature>
<feature type="binding site" evidence="2">
    <location>
        <begin position="173"/>
        <end position="228"/>
    </location>
    <ligand>
        <name>ATP</name>
        <dbReference type="ChEBI" id="CHEBI:30616"/>
    </ligand>
</feature>
<feature type="binding site" evidence="2">
    <location>
        <position position="299"/>
    </location>
    <ligand>
        <name>Mg(2+)</name>
        <dbReference type="ChEBI" id="CHEBI:18420"/>
        <label>1</label>
    </ligand>
</feature>
<feature type="binding site" evidence="2">
    <location>
        <position position="313"/>
    </location>
    <ligand>
        <name>Mg(2+)</name>
        <dbReference type="ChEBI" id="CHEBI:18420"/>
        <label>1</label>
    </ligand>
</feature>
<feature type="binding site" evidence="2">
    <location>
        <position position="313"/>
    </location>
    <ligand>
        <name>Mg(2+)</name>
        <dbReference type="ChEBI" id="CHEBI:18420"/>
        <label>2</label>
    </ligand>
</feature>
<feature type="binding site" evidence="2">
    <location>
        <position position="315"/>
    </location>
    <ligand>
        <name>Mg(2+)</name>
        <dbReference type="ChEBI" id="CHEBI:18420"/>
        <label>2</label>
    </ligand>
</feature>
<organism>
    <name type="scientific">Synechococcus sp. (strain CC9605)</name>
    <dbReference type="NCBI Taxonomy" id="110662"/>
    <lineage>
        <taxon>Bacteria</taxon>
        <taxon>Bacillati</taxon>
        <taxon>Cyanobacteriota</taxon>
        <taxon>Cyanophyceae</taxon>
        <taxon>Synechococcales</taxon>
        <taxon>Synechococcaceae</taxon>
        <taxon>Synechococcus</taxon>
    </lineage>
</organism>
<keyword id="KW-0067">ATP-binding</keyword>
<keyword id="KW-0133">Cell shape</keyword>
<keyword id="KW-0961">Cell wall biogenesis/degradation</keyword>
<keyword id="KW-0963">Cytoplasm</keyword>
<keyword id="KW-0436">Ligase</keyword>
<keyword id="KW-0460">Magnesium</keyword>
<keyword id="KW-0464">Manganese</keyword>
<keyword id="KW-0479">Metal-binding</keyword>
<keyword id="KW-0547">Nucleotide-binding</keyword>
<keyword id="KW-0573">Peptidoglycan synthesis</keyword>
<sequence length="350" mass="38001">MPSSPITVGLVFGGRSGEHDVSIRSAATVVRGLRSGENTERYTVQPIYIDRDGRWWGTDLAEATLTSEVAPELTTPRPPSGFQGFPEGCDAIDLWYPVLHGPNGEDGTIQGLFQLTGKPFVGAGVLGSAVSMDKQAMKSAFSSAGLSQVPYVALHASELEDAKSRSALLDRIERELNYPCFVKPANLGSSVGISKVRSRQELEAGLEQAAALDPRLVVEQGVNAREVECAVLGRRTLEASVIGEVRFDADWYDYETKYTAGRSTTLIPAPLPDPVRDRIREQALQACAAVGVHGMSRVDFFYDETNDQLWINEINTLPGFTAQSMFPMLWAASGVTLEQLVHKLIQTAGE</sequence>
<name>DDL_SYNSC</name>
<proteinExistence type="inferred from homology"/>